<name>Y3206_SACS2</name>
<sequence>MKEIIFTEKAPKPIGPYSQGVKVGDILYVSGQIPVDPKTNEVVGKNIEEQTIRVIENIKAVLEAAGYMLDDVVMSFVYLKDIKDFQRFNEVYSKYFSNKPPARVTVEVSRLPRDVLIEITVIAQKS</sequence>
<comment type="similarity">
    <text evidence="1">Belongs to the RutC family.</text>
</comment>
<organism>
    <name type="scientific">Saccharolobus solfataricus (strain ATCC 35092 / DSM 1617 / JCM 11322 / P2)</name>
    <name type="common">Sulfolobus solfataricus</name>
    <dbReference type="NCBI Taxonomy" id="273057"/>
    <lineage>
        <taxon>Archaea</taxon>
        <taxon>Thermoproteota</taxon>
        <taxon>Thermoprotei</taxon>
        <taxon>Sulfolobales</taxon>
        <taxon>Sulfolobaceae</taxon>
        <taxon>Saccharolobus</taxon>
    </lineage>
</organism>
<proteinExistence type="inferred from homology"/>
<gene>
    <name type="ordered locus">SSO3206</name>
</gene>
<reference key="1">
    <citation type="journal article" date="2001" name="Proc. Natl. Acad. Sci. U.S.A.">
        <title>The complete genome of the crenarchaeon Sulfolobus solfataricus P2.</title>
        <authorList>
            <person name="She Q."/>
            <person name="Singh R.K."/>
            <person name="Confalonieri F."/>
            <person name="Zivanovic Y."/>
            <person name="Allard G."/>
            <person name="Awayez M.J."/>
            <person name="Chan-Weiher C.C.-Y."/>
            <person name="Clausen I.G."/>
            <person name="Curtis B.A."/>
            <person name="De Moors A."/>
            <person name="Erauso G."/>
            <person name="Fletcher C."/>
            <person name="Gordon P.M.K."/>
            <person name="Heikamp-de Jong I."/>
            <person name="Jeffries A.C."/>
            <person name="Kozera C.J."/>
            <person name="Medina N."/>
            <person name="Peng X."/>
            <person name="Thi-Ngoc H.P."/>
            <person name="Redder P."/>
            <person name="Schenk M.E."/>
            <person name="Theriault C."/>
            <person name="Tolstrup N."/>
            <person name="Charlebois R.L."/>
            <person name="Doolittle W.F."/>
            <person name="Duguet M."/>
            <person name="Gaasterland T."/>
            <person name="Garrett R.A."/>
            <person name="Ragan M.A."/>
            <person name="Sensen C.W."/>
            <person name="Van der Oost J."/>
        </authorList>
    </citation>
    <scope>NUCLEOTIDE SEQUENCE [LARGE SCALE GENOMIC DNA]</scope>
    <source>
        <strain>ATCC 35092 / DSM 1617 / JCM 11322 / P2</strain>
    </source>
</reference>
<accession>Q97U19</accession>
<feature type="chain" id="PRO_0000170345" description="RutC family protein SSO3206">
    <location>
        <begin position="1"/>
        <end position="126"/>
    </location>
</feature>
<evidence type="ECO:0000305" key="1"/>
<protein>
    <recommendedName>
        <fullName>RutC family protein SSO3206</fullName>
    </recommendedName>
</protein>
<keyword id="KW-1185">Reference proteome</keyword>
<dbReference type="EMBL" id="AE006641">
    <property type="protein sequence ID" value="AAK43303.1"/>
    <property type="molecule type" value="Genomic_DNA"/>
</dbReference>
<dbReference type="PIR" id="H90505">
    <property type="entry name" value="H90505"/>
</dbReference>
<dbReference type="RefSeq" id="WP_009991672.1">
    <property type="nucleotide sequence ID" value="NC_002754.1"/>
</dbReference>
<dbReference type="SMR" id="Q97U19"/>
<dbReference type="FunCoup" id="Q97U19">
    <property type="interactions" value="231"/>
</dbReference>
<dbReference type="STRING" id="273057.SSO3206"/>
<dbReference type="PaxDb" id="273057-SSO3206"/>
<dbReference type="EnsemblBacteria" id="AAK43303">
    <property type="protein sequence ID" value="AAK43303"/>
    <property type="gene ID" value="SSO3206"/>
</dbReference>
<dbReference type="KEGG" id="sso:SSO3206"/>
<dbReference type="PATRIC" id="fig|273057.12.peg.3308"/>
<dbReference type="eggNOG" id="arCOG01630">
    <property type="taxonomic scope" value="Archaea"/>
</dbReference>
<dbReference type="HOGENOM" id="CLU_100715_7_3_2"/>
<dbReference type="InParanoid" id="Q97U19"/>
<dbReference type="PhylomeDB" id="Q97U19"/>
<dbReference type="Proteomes" id="UP000001974">
    <property type="component" value="Chromosome"/>
</dbReference>
<dbReference type="GO" id="GO:0005829">
    <property type="term" value="C:cytosol"/>
    <property type="evidence" value="ECO:0000318"/>
    <property type="project" value="GO_Central"/>
</dbReference>
<dbReference type="GO" id="GO:0019239">
    <property type="term" value="F:deaminase activity"/>
    <property type="evidence" value="ECO:0000318"/>
    <property type="project" value="GO_Central"/>
</dbReference>
<dbReference type="CDD" id="cd00448">
    <property type="entry name" value="YjgF_YER057c_UK114_family"/>
    <property type="match status" value="1"/>
</dbReference>
<dbReference type="FunFam" id="3.30.1330.40:FF:000001">
    <property type="entry name" value="L-PSP family endoribonuclease"/>
    <property type="match status" value="1"/>
</dbReference>
<dbReference type="Gene3D" id="3.30.1330.40">
    <property type="entry name" value="RutC-like"/>
    <property type="match status" value="1"/>
</dbReference>
<dbReference type="InterPro" id="IPR006056">
    <property type="entry name" value="RidA"/>
</dbReference>
<dbReference type="InterPro" id="IPR019897">
    <property type="entry name" value="RidA_CS"/>
</dbReference>
<dbReference type="InterPro" id="IPR035959">
    <property type="entry name" value="RutC-like_sf"/>
</dbReference>
<dbReference type="InterPro" id="IPR006175">
    <property type="entry name" value="YjgF/YER057c/UK114"/>
</dbReference>
<dbReference type="NCBIfam" id="TIGR00004">
    <property type="entry name" value="Rid family detoxifying hydrolase"/>
    <property type="match status" value="1"/>
</dbReference>
<dbReference type="PANTHER" id="PTHR11803">
    <property type="entry name" value="2-IMINOBUTANOATE/2-IMINOPROPANOATE DEAMINASE RIDA"/>
    <property type="match status" value="1"/>
</dbReference>
<dbReference type="PANTHER" id="PTHR11803:SF39">
    <property type="entry name" value="2-IMINOBUTANOATE_2-IMINOPROPANOATE DEAMINASE"/>
    <property type="match status" value="1"/>
</dbReference>
<dbReference type="Pfam" id="PF01042">
    <property type="entry name" value="Ribonuc_L-PSP"/>
    <property type="match status" value="1"/>
</dbReference>
<dbReference type="SUPFAM" id="SSF55298">
    <property type="entry name" value="YjgF-like"/>
    <property type="match status" value="1"/>
</dbReference>
<dbReference type="PROSITE" id="PS01094">
    <property type="entry name" value="UPF0076"/>
    <property type="match status" value="1"/>
</dbReference>